<sequence>MKNVVLETNLKGVKLLRRGKVRDIYEIEDYLLIVATDRVSAFDVVLPTGIPEKGKILTQISLFWFDKVKDIVENHLVSANADEFPEPLPAYKEILEGRSMLVKKAKPLPVECIVRGYLSGSGWKDYQKTGMICGIKLPEGLVESAKLPEPVFTPSTKAEQGHDINISFEETIQILGEETAQKVKELSLSIYKKAAQIAEKKGIIIADTKMEFGFYNGKLILIDELLTPDSSRFWSLENYRIGYPQDSYDKQIVRDYLLSIKWDKKPPAPQLPEDIVNKTAERYKEIFRILTS</sequence>
<evidence type="ECO:0000255" key="1">
    <source>
        <dbReference type="HAMAP-Rule" id="MF_00137"/>
    </source>
</evidence>
<dbReference type="EC" id="6.3.2.6" evidence="1"/>
<dbReference type="EMBL" id="CP001147">
    <property type="protein sequence ID" value="ACI20723.1"/>
    <property type="molecule type" value="Genomic_DNA"/>
</dbReference>
<dbReference type="RefSeq" id="WP_012545457.1">
    <property type="nucleotide sequence ID" value="NC_011296.1"/>
</dbReference>
<dbReference type="RefSeq" id="YP_002249081.1">
    <property type="nucleotide sequence ID" value="NC_011296.1"/>
</dbReference>
<dbReference type="SMR" id="B5YFN3"/>
<dbReference type="FunCoup" id="B5YFN3">
    <property type="interactions" value="396"/>
</dbReference>
<dbReference type="STRING" id="289376.THEYE_A1265"/>
<dbReference type="EnsemblBacteria" id="ACI20723">
    <property type="protein sequence ID" value="ACI20723"/>
    <property type="gene ID" value="THEYE_A1265"/>
</dbReference>
<dbReference type="KEGG" id="tye:THEYE_A1265"/>
<dbReference type="PATRIC" id="fig|289376.4.peg.1236"/>
<dbReference type="eggNOG" id="COG0152">
    <property type="taxonomic scope" value="Bacteria"/>
</dbReference>
<dbReference type="HOGENOM" id="CLU_045637_0_2_0"/>
<dbReference type="InParanoid" id="B5YFN3"/>
<dbReference type="OrthoDB" id="9801549at2"/>
<dbReference type="UniPathway" id="UPA00074">
    <property type="reaction ID" value="UER00131"/>
</dbReference>
<dbReference type="Proteomes" id="UP000000718">
    <property type="component" value="Chromosome"/>
</dbReference>
<dbReference type="GO" id="GO:0005524">
    <property type="term" value="F:ATP binding"/>
    <property type="evidence" value="ECO:0007669"/>
    <property type="project" value="UniProtKB-KW"/>
</dbReference>
<dbReference type="GO" id="GO:0004639">
    <property type="term" value="F:phosphoribosylaminoimidazolesuccinocarboxamide synthase activity"/>
    <property type="evidence" value="ECO:0000318"/>
    <property type="project" value="GO_Central"/>
</dbReference>
<dbReference type="GO" id="GO:0006189">
    <property type="term" value="P:'de novo' IMP biosynthetic process"/>
    <property type="evidence" value="ECO:0000318"/>
    <property type="project" value="GO_Central"/>
</dbReference>
<dbReference type="CDD" id="cd01414">
    <property type="entry name" value="SAICAR_synt_Sc"/>
    <property type="match status" value="1"/>
</dbReference>
<dbReference type="FunFam" id="3.30.200.20:FF:000392">
    <property type="entry name" value="Phosphoribosylaminoimidazole-succinocarboxamide synthase"/>
    <property type="match status" value="1"/>
</dbReference>
<dbReference type="FunFam" id="3.30.470.20:FF:000015">
    <property type="entry name" value="Phosphoribosylaminoimidazole-succinocarboxamide synthase"/>
    <property type="match status" value="1"/>
</dbReference>
<dbReference type="Gene3D" id="3.30.470.20">
    <property type="entry name" value="ATP-grasp fold, B domain"/>
    <property type="match status" value="1"/>
</dbReference>
<dbReference type="Gene3D" id="3.30.200.20">
    <property type="entry name" value="Phosphorylase Kinase, domain 1"/>
    <property type="match status" value="1"/>
</dbReference>
<dbReference type="HAMAP" id="MF_00137">
    <property type="entry name" value="SAICAR_synth"/>
    <property type="match status" value="1"/>
</dbReference>
<dbReference type="InterPro" id="IPR028923">
    <property type="entry name" value="SAICAR_synt/ADE2_N"/>
</dbReference>
<dbReference type="InterPro" id="IPR001636">
    <property type="entry name" value="SAICAR_synth"/>
</dbReference>
<dbReference type="InterPro" id="IPR018236">
    <property type="entry name" value="SAICAR_synthetase_CS"/>
</dbReference>
<dbReference type="NCBIfam" id="NF010568">
    <property type="entry name" value="PRK13961.1"/>
    <property type="match status" value="1"/>
</dbReference>
<dbReference type="NCBIfam" id="TIGR00081">
    <property type="entry name" value="purC"/>
    <property type="match status" value="1"/>
</dbReference>
<dbReference type="PANTHER" id="PTHR43700">
    <property type="entry name" value="PHOSPHORIBOSYLAMINOIMIDAZOLE-SUCCINOCARBOXAMIDE SYNTHASE"/>
    <property type="match status" value="1"/>
</dbReference>
<dbReference type="PANTHER" id="PTHR43700:SF1">
    <property type="entry name" value="PHOSPHORIBOSYLAMINOIMIDAZOLE-SUCCINOCARBOXAMIDE SYNTHASE"/>
    <property type="match status" value="1"/>
</dbReference>
<dbReference type="Pfam" id="PF01259">
    <property type="entry name" value="SAICAR_synt"/>
    <property type="match status" value="1"/>
</dbReference>
<dbReference type="SUPFAM" id="SSF56104">
    <property type="entry name" value="SAICAR synthase-like"/>
    <property type="match status" value="1"/>
</dbReference>
<dbReference type="PROSITE" id="PS01057">
    <property type="entry name" value="SAICAR_SYNTHETASE_1"/>
    <property type="match status" value="1"/>
</dbReference>
<protein>
    <recommendedName>
        <fullName evidence="1">Phosphoribosylaminoimidazole-succinocarboxamide synthase</fullName>
        <ecNumber evidence="1">6.3.2.6</ecNumber>
    </recommendedName>
    <alternativeName>
        <fullName evidence="1">SAICAR synthetase</fullName>
    </alternativeName>
</protein>
<proteinExistence type="inferred from homology"/>
<organism>
    <name type="scientific">Thermodesulfovibrio yellowstonii (strain ATCC 51303 / DSM 11347 / YP87)</name>
    <dbReference type="NCBI Taxonomy" id="289376"/>
    <lineage>
        <taxon>Bacteria</taxon>
        <taxon>Pseudomonadati</taxon>
        <taxon>Nitrospirota</taxon>
        <taxon>Thermodesulfovibrionia</taxon>
        <taxon>Thermodesulfovibrionales</taxon>
        <taxon>Thermodesulfovibrionaceae</taxon>
        <taxon>Thermodesulfovibrio</taxon>
    </lineage>
</organism>
<keyword id="KW-0067">ATP-binding</keyword>
<keyword id="KW-0436">Ligase</keyword>
<keyword id="KW-0547">Nucleotide-binding</keyword>
<keyword id="KW-0658">Purine biosynthesis</keyword>
<keyword id="KW-1185">Reference proteome</keyword>
<comment type="catalytic activity">
    <reaction evidence="1">
        <text>5-amino-1-(5-phospho-D-ribosyl)imidazole-4-carboxylate + L-aspartate + ATP = (2S)-2-[5-amino-1-(5-phospho-beta-D-ribosyl)imidazole-4-carboxamido]succinate + ADP + phosphate + 2 H(+)</text>
        <dbReference type="Rhea" id="RHEA:22628"/>
        <dbReference type="ChEBI" id="CHEBI:15378"/>
        <dbReference type="ChEBI" id="CHEBI:29991"/>
        <dbReference type="ChEBI" id="CHEBI:30616"/>
        <dbReference type="ChEBI" id="CHEBI:43474"/>
        <dbReference type="ChEBI" id="CHEBI:58443"/>
        <dbReference type="ChEBI" id="CHEBI:77657"/>
        <dbReference type="ChEBI" id="CHEBI:456216"/>
        <dbReference type="EC" id="6.3.2.6"/>
    </reaction>
</comment>
<comment type="pathway">
    <text evidence="1">Purine metabolism; IMP biosynthesis via de novo pathway; 5-amino-1-(5-phospho-D-ribosyl)imidazole-4-carboxamide from 5-amino-1-(5-phospho-D-ribosyl)imidazole-4-carboxylate: step 1/2.</text>
</comment>
<comment type="similarity">
    <text evidence="1">Belongs to the SAICAR synthetase family.</text>
</comment>
<reference key="1">
    <citation type="submission" date="2008-08" db="EMBL/GenBank/DDBJ databases">
        <title>The complete genome sequence of Thermodesulfovibrio yellowstonii strain ATCC 51303 / DSM 11347 / YP87.</title>
        <authorList>
            <person name="Dodson R.J."/>
            <person name="Durkin A.S."/>
            <person name="Wu M."/>
            <person name="Eisen J."/>
            <person name="Sutton G."/>
        </authorList>
    </citation>
    <scope>NUCLEOTIDE SEQUENCE [LARGE SCALE GENOMIC DNA]</scope>
    <source>
        <strain>ATCC 51303 / DSM 11347 / YP87</strain>
    </source>
</reference>
<accession>B5YFN3</accession>
<gene>
    <name evidence="1" type="primary">purC</name>
    <name type="ordered locus">THEYE_A1265</name>
</gene>
<name>PUR7_THEYD</name>
<feature type="chain" id="PRO_1000096025" description="Phosphoribosylaminoimidazole-succinocarboxamide synthase">
    <location>
        <begin position="1"/>
        <end position="292"/>
    </location>
</feature>